<name>COPP_HELPY</name>
<dbReference type="EMBL" id="U59625">
    <property type="protein sequence ID" value="AAB05476.1"/>
    <property type="molecule type" value="Genomic_DNA"/>
</dbReference>
<dbReference type="EMBL" id="U97567">
    <property type="protein sequence ID" value="AAB66381.1"/>
    <property type="molecule type" value="Genomic_DNA"/>
</dbReference>
<dbReference type="EMBL" id="L33259">
    <property type="protein sequence ID" value="AAB67321.1"/>
    <property type="molecule type" value="Genomic_DNA"/>
</dbReference>
<dbReference type="EMBL" id="AE000511">
    <property type="protein sequence ID" value="AAD08120.1"/>
    <property type="molecule type" value="Genomic_DNA"/>
</dbReference>
<dbReference type="PIR" id="A64654">
    <property type="entry name" value="A64654"/>
</dbReference>
<dbReference type="RefSeq" id="NP_207864.1">
    <property type="nucleotide sequence ID" value="NC_000915.1"/>
</dbReference>
<dbReference type="RefSeq" id="WP_000648265.1">
    <property type="nucleotide sequence ID" value="NC_018939.1"/>
</dbReference>
<dbReference type="PDB" id="1YG0">
    <property type="method" value="NMR"/>
    <property type="chains" value="A=1-66"/>
</dbReference>
<dbReference type="PDBsum" id="1YG0"/>
<dbReference type="SMR" id="Q48271"/>
<dbReference type="DIP" id="DIP-3638N"/>
<dbReference type="IntAct" id="Q48271">
    <property type="interactions" value="4"/>
</dbReference>
<dbReference type="MINT" id="Q48271"/>
<dbReference type="STRING" id="85962.HP_1073"/>
<dbReference type="PaxDb" id="85962-C694_05545"/>
<dbReference type="EnsemblBacteria" id="AAD08120">
    <property type="protein sequence ID" value="AAD08120"/>
    <property type="gene ID" value="HP_1073"/>
</dbReference>
<dbReference type="KEGG" id="heo:C694_05545"/>
<dbReference type="KEGG" id="hpy:HP_1073"/>
<dbReference type="PATRIC" id="fig|85962.47.peg.1152"/>
<dbReference type="eggNOG" id="COG2608">
    <property type="taxonomic scope" value="Bacteria"/>
</dbReference>
<dbReference type="InParanoid" id="Q48271"/>
<dbReference type="OrthoDB" id="9801832at2"/>
<dbReference type="EvolutionaryTrace" id="Q48271"/>
<dbReference type="Proteomes" id="UP000000429">
    <property type="component" value="Chromosome"/>
</dbReference>
<dbReference type="GO" id="GO:0005507">
    <property type="term" value="F:copper ion binding"/>
    <property type="evidence" value="ECO:0007669"/>
    <property type="project" value="InterPro"/>
</dbReference>
<dbReference type="GO" id="GO:0006825">
    <property type="term" value="P:copper ion transport"/>
    <property type="evidence" value="ECO:0007669"/>
    <property type="project" value="InterPro"/>
</dbReference>
<dbReference type="CDD" id="cd00371">
    <property type="entry name" value="HMA"/>
    <property type="match status" value="1"/>
</dbReference>
<dbReference type="Gene3D" id="3.30.70.100">
    <property type="match status" value="1"/>
</dbReference>
<dbReference type="InterPro" id="IPR000428">
    <property type="entry name" value="Cu-bd"/>
</dbReference>
<dbReference type="InterPro" id="IPR017969">
    <property type="entry name" value="Heavy-metal-associated_CS"/>
</dbReference>
<dbReference type="InterPro" id="IPR006122">
    <property type="entry name" value="HMA_Cu_ion-bd"/>
</dbReference>
<dbReference type="InterPro" id="IPR006121">
    <property type="entry name" value="HMA_dom"/>
</dbReference>
<dbReference type="InterPro" id="IPR036163">
    <property type="entry name" value="HMA_dom_sf"/>
</dbReference>
<dbReference type="NCBIfam" id="NF033781">
    <property type="entry name" value="chaper_CopP"/>
    <property type="match status" value="1"/>
</dbReference>
<dbReference type="NCBIfam" id="TIGR00003">
    <property type="entry name" value="copper ion binding protein"/>
    <property type="match status" value="1"/>
</dbReference>
<dbReference type="Pfam" id="PF00403">
    <property type="entry name" value="HMA"/>
    <property type="match status" value="1"/>
</dbReference>
<dbReference type="PRINTS" id="PR00944">
    <property type="entry name" value="CUEXPORT"/>
</dbReference>
<dbReference type="SUPFAM" id="SSF55008">
    <property type="entry name" value="HMA, heavy metal-associated domain"/>
    <property type="match status" value="1"/>
</dbReference>
<dbReference type="PROSITE" id="PS01047">
    <property type="entry name" value="HMA_1"/>
    <property type="match status" value="1"/>
</dbReference>
<dbReference type="PROSITE" id="PS50846">
    <property type="entry name" value="HMA_2"/>
    <property type="match status" value="1"/>
</dbReference>
<gene>
    <name type="primary">copP</name>
    <name type="ordered locus">HP_1073</name>
</gene>
<feature type="chain" id="PRO_0000079246" description="COP-associated protein">
    <location>
        <begin position="1"/>
        <end position="66"/>
    </location>
</feature>
<feature type="domain" description="HMA" evidence="1">
    <location>
        <begin position="1"/>
        <end position="66"/>
    </location>
</feature>
<feature type="binding site" evidence="1">
    <location>
        <position position="12"/>
    </location>
    <ligand>
        <name>Cu cation</name>
        <dbReference type="ChEBI" id="CHEBI:23378"/>
    </ligand>
</feature>
<feature type="binding site" evidence="1">
    <location>
        <position position="15"/>
    </location>
    <ligand>
        <name>Cu cation</name>
        <dbReference type="ChEBI" id="CHEBI:23378"/>
    </ligand>
</feature>
<feature type="disulfide bond" description="Alternate" evidence="2">
    <location>
        <begin position="12"/>
        <end position="15"/>
    </location>
</feature>
<feature type="sequence variant" description="In strain: A68, NCTC 11638 and NCTC 11639.">
    <original>A</original>
    <variation>V</variation>
    <location>
        <position position="3"/>
    </location>
</feature>
<feature type="sequence variant" description="In strain: NCTC 11638.">
    <original>N</original>
    <variation>D</variation>
    <location>
        <position position="13"/>
    </location>
</feature>
<feature type="sequence variant" description="In strain: NCTC 11639.">
    <original>N</original>
    <variation>S</variation>
    <location>
        <position position="13"/>
    </location>
</feature>
<feature type="sequence variant" description="In strain: A68, NCTC 11638 and NCTC 11639.">
    <original>V</original>
    <variation>A</variation>
    <location>
        <position position="34"/>
    </location>
</feature>
<feature type="sequence variant" description="In strain: NCTC 11639.">
    <original>S</original>
    <variation>N</variation>
    <location>
        <position position="35"/>
    </location>
</feature>
<feature type="sequence variant" description="In strain: A68, NCTC 11638 and NCTC 11639.">
    <original>V</original>
    <variation>I</variation>
    <location>
        <position position="66"/>
    </location>
</feature>
<feature type="strand" evidence="3">
    <location>
        <begin position="2"/>
        <end position="5"/>
    </location>
</feature>
<feature type="helix" evidence="3">
    <location>
        <begin position="14"/>
        <end position="23"/>
    </location>
</feature>
<feature type="strand" evidence="3">
    <location>
        <begin position="26"/>
        <end position="35"/>
    </location>
</feature>
<feature type="turn" evidence="3">
    <location>
        <begin position="36"/>
        <end position="39"/>
    </location>
</feature>
<feature type="strand" evidence="3">
    <location>
        <begin position="40"/>
        <end position="45"/>
    </location>
</feature>
<feature type="helix" evidence="3">
    <location>
        <begin position="51"/>
        <end position="61"/>
    </location>
</feature>
<sequence length="66" mass="7196">MKATFQVPSITCNHCVDKIEKFVGEIEGVSFIDVSVEKKSVVVEFDAPATQDLIKEALLDAGQEVV</sequence>
<evidence type="ECO:0000255" key="1">
    <source>
        <dbReference type="PROSITE-ProRule" id="PRU00280"/>
    </source>
</evidence>
<evidence type="ECO:0000269" key="2">
    <source>
    </source>
</evidence>
<evidence type="ECO:0007829" key="3">
    <source>
        <dbReference type="PDB" id="1YG0"/>
    </source>
</evidence>
<proteinExistence type="evidence at protein level"/>
<reference key="1">
    <citation type="journal article" date="1996" name="J. Biol. Chem.">
        <title>Cloning and membrane topology of a P type ATPase from Helicobacter pylori.</title>
        <authorList>
            <person name="Melchers K."/>
            <person name="Weitzenegger T."/>
            <person name="Buhmann A."/>
            <person name="Steinhilber W."/>
            <person name="Sachs G."/>
            <person name="Schaefer K.P."/>
        </authorList>
    </citation>
    <scope>NUCLEOTIDE SEQUENCE [GENOMIC DNA]</scope>
    <source>
        <strain>A68</strain>
    </source>
</reference>
<reference key="2">
    <citation type="journal article" date="1995" name="Mol. Microbiol.">
        <title>Nucleotide sequence and mutational analysis indicate that two Helicobacter pylori genes encode a P-type ATPase and a cation-binding protein associated with copper transport.</title>
        <authorList>
            <person name="Ge Z."/>
            <person name="Hiratsuka K."/>
            <person name="Taylor D.E."/>
        </authorList>
    </citation>
    <scope>NUCLEOTIDE SEQUENCE [GENOMIC DNA]</scope>
    <source>
        <strain>ATCC 43629 / JCM 7656 / NCTC 11639 / UA802</strain>
    </source>
</reference>
<reference key="3">
    <citation type="journal article" date="1997" name="J. Bacteriol.">
        <title>Identification and characterization of an operon of Helicobacter pylori that is involved in motility and stress adaptation.</title>
        <authorList>
            <person name="Beier D."/>
            <person name="Spohn G."/>
            <person name="Rappuoli R."/>
            <person name="Scarlato V."/>
        </authorList>
    </citation>
    <scope>NUCLEOTIDE SEQUENCE [GENOMIC DNA]</scope>
    <source>
        <strain>DSM 4867 / CCUG 17874 / NCTC 11638</strain>
    </source>
</reference>
<reference key="4">
    <citation type="journal article" date="1997" name="Nature">
        <title>The complete genome sequence of the gastric pathogen Helicobacter pylori.</title>
        <authorList>
            <person name="Tomb J.-F."/>
            <person name="White O."/>
            <person name="Kerlavage A.R."/>
            <person name="Clayton R.A."/>
            <person name="Sutton G.G."/>
            <person name="Fleischmann R.D."/>
            <person name="Ketchum K.A."/>
            <person name="Klenk H.-P."/>
            <person name="Gill S.R."/>
            <person name="Dougherty B.A."/>
            <person name="Nelson K.E."/>
            <person name="Quackenbush J."/>
            <person name="Zhou L."/>
            <person name="Kirkness E.F."/>
            <person name="Peterson S.N."/>
            <person name="Loftus B.J."/>
            <person name="Richardson D.L."/>
            <person name="Dodson R.J."/>
            <person name="Khalak H.G."/>
            <person name="Glodek A."/>
            <person name="McKenney K."/>
            <person name="FitzGerald L.M."/>
            <person name="Lee N."/>
            <person name="Adams M.D."/>
            <person name="Hickey E.K."/>
            <person name="Berg D.E."/>
            <person name="Gocayne J.D."/>
            <person name="Utterback T.R."/>
            <person name="Peterson J.D."/>
            <person name="Kelley J.M."/>
            <person name="Cotton M.D."/>
            <person name="Weidman J.F."/>
            <person name="Fujii C."/>
            <person name="Bowman C."/>
            <person name="Watthey L."/>
            <person name="Wallin E."/>
            <person name="Hayes W.S."/>
            <person name="Borodovsky M."/>
            <person name="Karp P.D."/>
            <person name="Smith H.O."/>
            <person name="Fraser C.M."/>
            <person name="Venter J.C."/>
        </authorList>
    </citation>
    <scope>NUCLEOTIDE SEQUENCE [LARGE SCALE GENOMIC DNA]</scope>
    <source>
        <strain>ATCC 700392 / 26695</strain>
    </source>
</reference>
<reference key="5">
    <citation type="journal article" date="2008" name="Proteins">
        <title>Structural insight into the distinct properties of copper transport by the Helicobacter pylori CopP protein.</title>
        <authorList>
            <person name="Park S.J."/>
            <person name="Jung Y.-S."/>
            <person name="Kim J.-S."/>
            <person name="Seo M.-D."/>
            <person name="Lee B.J."/>
        </authorList>
    </citation>
    <scope>STRUCTURE BY NMR IN COMPLEX WITH COPPER IONS</scope>
    <scope>DISULFIDE BOND</scope>
</reference>
<accession>Q48271</accession>
<accession>O07682</accession>
<accession>Q48257</accession>
<organism>
    <name type="scientific">Helicobacter pylori (strain ATCC 700392 / 26695)</name>
    <name type="common">Campylobacter pylori</name>
    <dbReference type="NCBI Taxonomy" id="85962"/>
    <lineage>
        <taxon>Bacteria</taxon>
        <taxon>Pseudomonadati</taxon>
        <taxon>Campylobacterota</taxon>
        <taxon>Epsilonproteobacteria</taxon>
        <taxon>Campylobacterales</taxon>
        <taxon>Helicobacteraceae</taxon>
        <taxon>Helicobacter</taxon>
    </lineage>
</organism>
<comment type="function">
    <text>Part of a cation-transporting system which is associated with copper export out of the H.pylori cells.</text>
</comment>
<comment type="interaction">
    <interactant intactId="EBI-7497456">
        <id>Q48271</id>
    </interactant>
    <interactant intactId="EBI-7497678">
        <id>P56039</id>
        <label>rplN</label>
    </interactant>
    <organismsDiffer>false</organismsDiffer>
    <experiments>3</experiments>
</comment>
<comment type="miscellaneous">
    <text>Copper (2+) binding can oxidyze the Cys residues at the metal-binding site, leading to the formation of a disulfide bond.</text>
</comment>
<protein>
    <recommendedName>
        <fullName>COP-associated protein</fullName>
    </recommendedName>
    <alternativeName>
        <fullName>Copper ion-binding protein</fullName>
    </alternativeName>
</protein>
<keyword id="KW-0002">3D-structure</keyword>
<keyword id="KW-0186">Copper</keyword>
<keyword id="KW-1015">Disulfide bond</keyword>
<keyword id="KW-0479">Metal-binding</keyword>
<keyword id="KW-1185">Reference proteome</keyword>